<comment type="function">
    <text evidence="3">Involved in biosynthesis of di-myo-inositol phosphate (DIP), a widespread organic solute in microorganisms adapted to hot environments. Catalyzes the condensation of CTP and L-myo-inositol-1-phosphate into CDP-L-myo-inositol, as well as the biosynthesis of di-myo-inositol-1,3'-phosphate-1'-phosphate (DIPP) from CDP-L-myo-inositol and L-myo-inositol-1-phosphate.</text>
</comment>
<comment type="catalytic activity">
    <reaction evidence="3">
        <text>1D-myo-inositol 3-phosphate + CTP + H(+) = CDP-1L-myo-inositol + diphosphate</text>
        <dbReference type="Rhea" id="RHEA:30647"/>
        <dbReference type="ChEBI" id="CHEBI:15378"/>
        <dbReference type="ChEBI" id="CHEBI:33019"/>
        <dbReference type="ChEBI" id="CHEBI:37563"/>
        <dbReference type="ChEBI" id="CHEBI:58401"/>
        <dbReference type="ChEBI" id="CHEBI:62573"/>
        <dbReference type="EC" id="2.7.7.74"/>
    </reaction>
</comment>
<comment type="catalytic activity">
    <reaction evidence="3">
        <text>CDP-1L-myo-inositol + 1D-myo-inositol 3-phosphate = bis(1L-myo-inositol) 3,1'-phosphate 1-phosphate + CMP + H(+)</text>
        <dbReference type="Rhea" id="RHEA:31327"/>
        <dbReference type="ChEBI" id="CHEBI:15378"/>
        <dbReference type="ChEBI" id="CHEBI:58401"/>
        <dbReference type="ChEBI" id="CHEBI:60377"/>
        <dbReference type="ChEBI" id="CHEBI:62573"/>
        <dbReference type="ChEBI" id="CHEBI:62576"/>
        <dbReference type="EC" id="2.7.8.34"/>
    </reaction>
</comment>
<comment type="subcellular location">
    <subcellularLocation>
        <location evidence="4">Membrane</location>
        <topology evidence="4">Multi-pass membrane protein</topology>
    </subcellularLocation>
</comment>
<comment type="similarity">
    <text evidence="4">In the N-terminal section; belongs to the MobA family.</text>
</comment>
<comment type="similarity">
    <text evidence="4">In the C-terminal section; belongs to the CDP-alcohol phosphatidyltransferase class-I family.</text>
</comment>
<reference key="1">
    <citation type="journal article" date="2007" name="J. Bacteriol.">
        <title>Bifunctional CTP:inositol-1-phosphate cytidylyltransferase/CDP-inositol:inositol-1-phosphate transferase, the key enzyme for di-myo-inositol-phosphate synthesis in several (hyper)thermophiles.</title>
        <authorList>
            <person name="Rodrigues M.V."/>
            <person name="Borges N."/>
            <person name="Henriques M."/>
            <person name="Lamosa P."/>
            <person name="Ventura R."/>
            <person name="Fernandes C."/>
            <person name="Empadinhas N."/>
            <person name="Maycock C."/>
            <person name="da Costa M.S."/>
            <person name="Santos H."/>
        </authorList>
    </citation>
    <scope>NUCLEOTIDE SEQUENCE [GENOMIC DNA]</scope>
    <scope>FUNCTION</scope>
    <scope>CATALYTIC ACTIVITY</scope>
    <source>
        <strain>DSM 9941 / JCM 11954 / NBRC 16129 / PRD-1</strain>
    </source>
</reference>
<reference key="2">
    <citation type="submission" date="2006-06" db="EMBL/GenBank/DDBJ databases">
        <title>Complete sequence of Rubrobacter xylanophilus DSM 9941.</title>
        <authorList>
            <consortium name="US DOE Joint Genome Institute"/>
            <person name="Copeland A."/>
            <person name="Lucas S."/>
            <person name="Lapidus A."/>
            <person name="Barry K."/>
            <person name="Detter J.C."/>
            <person name="Glavina del Rio T."/>
            <person name="Hammon N."/>
            <person name="Israni S."/>
            <person name="Dalin E."/>
            <person name="Tice H."/>
            <person name="Pitluck S."/>
            <person name="Munk A.C."/>
            <person name="Brettin T."/>
            <person name="Bruce D."/>
            <person name="Han C."/>
            <person name="Tapia R."/>
            <person name="Gilna P."/>
            <person name="Schmutz J."/>
            <person name="Larimer F."/>
            <person name="Land M."/>
            <person name="Hauser L."/>
            <person name="Kyrpides N."/>
            <person name="Lykidis A."/>
            <person name="da Costa M.S."/>
            <person name="Rainey F.A."/>
            <person name="Empadinhas N."/>
            <person name="Jolivet E."/>
            <person name="Battista J.R."/>
            <person name="Richardson P."/>
        </authorList>
    </citation>
    <scope>NUCLEOTIDE SEQUENCE [LARGE SCALE GENOMIC DNA]</scope>
    <source>
        <strain>DSM 9941 / JCM 11954 / NBRC 16129 / PRD-1</strain>
    </source>
</reference>
<name>DIPPS_RUBXD</name>
<proteinExistence type="evidence at protein level"/>
<accession>Q1AWQ0</accession>
<accession>A7KPU8</accession>
<sequence>MPDERTTGREGVGAAVLAAGFGERLRECGRPKPLARVAGLTLLERTVRTLRAGGLEGEIVVVVGHRGEEVAGHCKARGLPVRVVENPDYPRGNGTSVLAAMRFLPERFVVAMVDHIHTPESVRRLLRCEGDFVAAVDTRPVYADPGEATRVRLEGGRVVEFGKNLPRYDGLDAGLFLCSRPALERLREASGGERLSWNDLKRAWLASGGEVVACDLAGAPWTDVDTPQDLRLSEEMVLGWAASGNDGPVSRHINRRISRRITRRLLDTPLSPDQVSLLSFALAALGAGLLAAGRLRLGGALVQLASIVDGCDGELARARLESSPRGAVFDATLDRWADALIISGLALGAGTRLAAAAGYPALAGALLVSYTRARWEAALGRMPSRFTGLGATRDVRLAVLALGGLLGAPGAALLATGALGNAEALRRLLALKRGRS</sequence>
<organism>
    <name type="scientific">Rubrobacter xylanophilus (strain DSM 9941 / JCM 11954 / NBRC 16129 / PRD-1)</name>
    <dbReference type="NCBI Taxonomy" id="266117"/>
    <lineage>
        <taxon>Bacteria</taxon>
        <taxon>Bacillati</taxon>
        <taxon>Actinomycetota</taxon>
        <taxon>Rubrobacteria</taxon>
        <taxon>Rubrobacterales</taxon>
        <taxon>Rubrobacteraceae</taxon>
        <taxon>Rubrobacter</taxon>
    </lineage>
</organism>
<feature type="chain" id="PRO_0000424331" description="Bifunctional IPC transferase and DIPP synthase">
    <location>
        <begin position="1"/>
        <end position="436"/>
    </location>
</feature>
<feature type="transmembrane region" description="Helical" evidence="2">
    <location>
        <begin position="275"/>
        <end position="295"/>
    </location>
</feature>
<feature type="transmembrane region" description="Helical" evidence="2">
    <location>
        <begin position="349"/>
        <end position="371"/>
    </location>
</feature>
<feature type="transmembrane region" description="Helical" evidence="2">
    <location>
        <begin position="397"/>
        <end position="417"/>
    </location>
</feature>
<feature type="region of interest" description="MobA-like NTP transferase" evidence="1">
    <location>
        <begin position="11"/>
        <end position="241"/>
    </location>
</feature>
<feature type="region of interest" description="CDP-alcohol phosphatidyltransferases" evidence="1">
    <location>
        <begin position="242"/>
        <end position="435"/>
    </location>
</feature>
<feature type="binding site" evidence="1">
    <location>
        <begin position="17"/>
        <end position="19"/>
    </location>
    <ligand>
        <name>CTP</name>
        <dbReference type="ChEBI" id="CHEBI:37563"/>
    </ligand>
</feature>
<feature type="binding site" evidence="1">
    <location>
        <position position="32"/>
    </location>
    <ligand>
        <name>CTP</name>
        <dbReference type="ChEBI" id="CHEBI:37563"/>
    </ligand>
</feature>
<feature type="sequence conflict" description="In Ref. 1; ABS30690." evidence="4" ref="1">
    <original>DERTTGREG</original>
    <variation>ETERRGDS</variation>
    <location>
        <begin position="3"/>
        <end position="11"/>
    </location>
</feature>
<feature type="sequence conflict" description="In Ref. 1; ABS30690." evidence="4" ref="1">
    <original>R</original>
    <variation>C</variation>
    <location>
        <position position="30"/>
    </location>
</feature>
<feature type="sequence conflict" description="In Ref. 1; ABS30690." evidence="4" ref="1">
    <original>E</original>
    <variation>D</variation>
    <location>
        <position position="56"/>
    </location>
</feature>
<feature type="sequence conflict" description="In Ref. 1; ABS30690." evidence="4" ref="1">
    <original>V</original>
    <variation>A</variation>
    <location>
        <position position="60"/>
    </location>
</feature>
<feature type="sequence conflict" description="In Ref. 1; ABS30690." evidence="4" ref="1">
    <original>E</original>
    <variation>D</variation>
    <location>
        <position position="68"/>
    </location>
</feature>
<feature type="sequence conflict" description="In Ref. 1; ABS30690." evidence="4" ref="1">
    <original>H</original>
    <variation>Y</variation>
    <location>
        <position position="73"/>
    </location>
</feature>
<feature type="sequence conflict" description="In Ref. 1; ABS30690." evidence="4" ref="1">
    <original>A</original>
    <variation>E</variation>
    <location>
        <position position="76"/>
    </location>
</feature>
<feature type="sequence conflict" description="In Ref. 1; ABS30690." evidence="4" ref="1">
    <original>I</original>
    <variation>V</variation>
    <location>
        <position position="116"/>
    </location>
</feature>
<feature type="sequence conflict" description="In Ref. 1; ABS30690." evidence="4" ref="1">
    <original>E</original>
    <variation>D</variation>
    <location>
        <position position="120"/>
    </location>
</feature>
<feature type="sequence conflict" description="In Ref. 1; ABS30690." evidence="4" ref="1">
    <original>R</original>
    <variation>G</variation>
    <location>
        <position position="127"/>
    </location>
</feature>
<feature type="sequence conflict" description="In Ref. 1; ABS30690." evidence="4" ref="1">
    <original>LEG</original>
    <variation>IES</variation>
    <location>
        <begin position="153"/>
        <end position="155"/>
    </location>
</feature>
<feature type="sequence conflict" description="In Ref. 1; ABS30690." evidence="4" ref="1">
    <original>E</original>
    <variation>D</variation>
    <location>
        <position position="160"/>
    </location>
</feature>
<feature type="sequence conflict" description="In Ref. 1; ABS30690." evidence="4" ref="1">
    <original>R</original>
    <variation>E</variation>
    <location>
        <position position="167"/>
    </location>
</feature>
<feature type="sequence conflict" description="In Ref. 1; ABS30690." evidence="4" ref="1">
    <original>P</original>
    <variation>L</variation>
    <location>
        <position position="181"/>
    </location>
</feature>
<feature type="sequence conflict" description="In Ref. 1; ABS30690." evidence="4" ref="1">
    <original>SGG</original>
    <variation>AGQ</variation>
    <location>
        <begin position="190"/>
        <end position="192"/>
    </location>
</feature>
<feature type="sequence conflict" description="In Ref. 1; ABS30690." evidence="4" ref="1">
    <original>Q</original>
    <variation>R</variation>
    <location>
        <position position="228"/>
    </location>
</feature>
<feature type="sequence conflict" description="In Ref. 1; ABS30690." evidence="4" ref="1">
    <original>R</original>
    <variation>H</variation>
    <location>
        <position position="231"/>
    </location>
</feature>
<feature type="sequence conflict" description="In Ref. 1; ABS30690." evidence="4" ref="1">
    <original>V</original>
    <variation>I</variation>
    <location>
        <position position="249"/>
    </location>
</feature>
<feature type="sequence conflict" description="In Ref. 1; ABS30690." evidence="4" ref="1">
    <original>L</original>
    <variation>F</variation>
    <location>
        <position position="265"/>
    </location>
</feature>
<feature type="sequence conflict" description="In Ref. 1; ABS30690." evidence="4" ref="1">
    <original>T</original>
    <variation>A</variation>
    <location>
        <position position="268"/>
    </location>
</feature>
<feature type="sequence conflict" description="In Ref. 1; ABS30690." evidence="4" ref="1">
    <original>L</original>
    <variation>A</variation>
    <location>
        <position position="297"/>
    </location>
</feature>
<feature type="sequence conflict" description="In Ref. 1; ABS30690." evidence="4" ref="1">
    <original>A</original>
    <variation>V</variation>
    <location>
        <position position="300"/>
    </location>
</feature>
<feature type="sequence conflict" description="In Ref. 1; ABS30690." evidence="4" ref="1">
    <original>I</original>
    <variation>V</variation>
    <location>
        <position position="307"/>
    </location>
</feature>
<feature type="sequence conflict" description="In Ref. 1; ABS30690." evidence="4" ref="1">
    <original>L</original>
    <variation>V</variation>
    <location>
        <position position="320"/>
    </location>
</feature>
<feature type="sequence conflict" description="In Ref. 1; ABS30690." evidence="4" ref="1">
    <original>L</original>
    <variation>R</variation>
    <location>
        <position position="353"/>
    </location>
</feature>
<feature type="sequence conflict" description="In Ref. 1; ABS30690." evidence="4" ref="1">
    <original>R</original>
    <variation>G</variation>
    <location>
        <position position="381"/>
    </location>
</feature>
<feature type="sequence conflict" description="In Ref. 1; ABS30690." evidence="4" ref="1">
    <original>LLGAPG</original>
    <variation>MLRAPV</variation>
    <location>
        <begin position="405"/>
        <end position="410"/>
    </location>
</feature>
<feature type="sequence conflict" description="In Ref. 1; ABS30690." evidence="4" ref="1">
    <original>A</original>
    <variation>I</variation>
    <location>
        <position position="418"/>
    </location>
</feature>
<feature type="sequence conflict" description="In Ref. 1; ABS30690." evidence="4" ref="1">
    <original>RGRS</original>
    <variation>KERT</variation>
    <location>
        <begin position="433"/>
        <end position="436"/>
    </location>
</feature>
<protein>
    <recommendedName>
        <fullName>Bifunctional IPC transferase and DIPP synthase</fullName>
    </recommendedName>
    <domain>
        <recommendedName>
            <fullName>1L-myo-inositol-1-phosphate cytidylyltransferase</fullName>
            <shortName>IPCT</shortName>
            <ecNumber>2.7.7.74</ecNumber>
        </recommendedName>
    </domain>
    <domain>
        <recommendedName>
            <fullName>CDP-L-myo-inositol myo-inositolphosphotransferase</fullName>
            <shortName>DIPP synthase</shortName>
            <ecNumber>2.7.8.34</ecNumber>
        </recommendedName>
        <alternativeName>
            <fullName>Di-myo-inositol-1,3'-phosphate-1'-phosphate synthase</fullName>
        </alternativeName>
    </domain>
</protein>
<evidence type="ECO:0000250" key="1"/>
<evidence type="ECO:0000255" key="2"/>
<evidence type="ECO:0000269" key="3">
    <source>
    </source>
</evidence>
<evidence type="ECO:0000305" key="4"/>
<dbReference type="EC" id="2.7.7.74"/>
<dbReference type="EC" id="2.7.8.34"/>
<dbReference type="EMBL" id="EF523341">
    <property type="protein sequence ID" value="ABS30690.1"/>
    <property type="molecule type" value="Genomic_DNA"/>
</dbReference>
<dbReference type="EMBL" id="CP000386">
    <property type="protein sequence ID" value="ABG04178.1"/>
    <property type="molecule type" value="Genomic_DNA"/>
</dbReference>
<dbReference type="RefSeq" id="WP_011564196.1">
    <property type="nucleotide sequence ID" value="NC_008148.1"/>
</dbReference>
<dbReference type="SMR" id="Q1AWQ0"/>
<dbReference type="STRING" id="266117.Rxyl_1212"/>
<dbReference type="KEGG" id="rxy:Rxyl_1212"/>
<dbReference type="eggNOG" id="COG0558">
    <property type="taxonomic scope" value="Bacteria"/>
</dbReference>
<dbReference type="eggNOG" id="COG1213">
    <property type="taxonomic scope" value="Bacteria"/>
</dbReference>
<dbReference type="HOGENOM" id="CLU_643435_0_0_11"/>
<dbReference type="OrthoDB" id="9803871at2"/>
<dbReference type="PhylomeDB" id="Q1AWQ0"/>
<dbReference type="BRENDA" id="2.7.7.74">
    <property type="organism ID" value="10017"/>
</dbReference>
<dbReference type="Proteomes" id="UP000006637">
    <property type="component" value="Chromosome"/>
</dbReference>
<dbReference type="GO" id="GO:0016020">
    <property type="term" value="C:membrane"/>
    <property type="evidence" value="ECO:0007669"/>
    <property type="project" value="UniProtKB-SubCell"/>
</dbReference>
<dbReference type="GO" id="GO:0016779">
    <property type="term" value="F:nucleotidyltransferase activity"/>
    <property type="evidence" value="ECO:0000314"/>
    <property type="project" value="UniProtKB"/>
</dbReference>
<dbReference type="GO" id="GO:0016780">
    <property type="term" value="F:phosphotransferase activity, for other substituted phosphate groups"/>
    <property type="evidence" value="ECO:0000314"/>
    <property type="project" value="UniProtKB"/>
</dbReference>
<dbReference type="GO" id="GO:0008654">
    <property type="term" value="P:phospholipid biosynthetic process"/>
    <property type="evidence" value="ECO:0007669"/>
    <property type="project" value="InterPro"/>
</dbReference>
<dbReference type="Gene3D" id="1.20.120.1760">
    <property type="match status" value="1"/>
</dbReference>
<dbReference type="Gene3D" id="3.90.550.10">
    <property type="entry name" value="Spore Coat Polysaccharide Biosynthesis Protein SpsA, Chain A"/>
    <property type="match status" value="1"/>
</dbReference>
<dbReference type="InterPro" id="IPR000462">
    <property type="entry name" value="CDP-OH_P_trans"/>
</dbReference>
<dbReference type="InterPro" id="IPR043130">
    <property type="entry name" value="CDP-OH_PTrfase_TM_dom"/>
</dbReference>
<dbReference type="InterPro" id="IPR048254">
    <property type="entry name" value="CDP_ALCOHOL_P_TRANSF_CS"/>
</dbReference>
<dbReference type="InterPro" id="IPR050065">
    <property type="entry name" value="GlmU-like"/>
</dbReference>
<dbReference type="InterPro" id="IPR025877">
    <property type="entry name" value="MobA-like_NTP_Trfase"/>
</dbReference>
<dbReference type="InterPro" id="IPR029044">
    <property type="entry name" value="Nucleotide-diphossugar_trans"/>
</dbReference>
<dbReference type="PANTHER" id="PTHR43584:SF8">
    <property type="entry name" value="N-ACETYLMURAMATE ALPHA-1-PHOSPHATE URIDYLYLTRANSFERASE"/>
    <property type="match status" value="1"/>
</dbReference>
<dbReference type="PANTHER" id="PTHR43584">
    <property type="entry name" value="NUCLEOTIDYL TRANSFERASE"/>
    <property type="match status" value="1"/>
</dbReference>
<dbReference type="Pfam" id="PF01066">
    <property type="entry name" value="CDP-OH_P_transf"/>
    <property type="match status" value="1"/>
</dbReference>
<dbReference type="Pfam" id="PF12804">
    <property type="entry name" value="NTP_transf_3"/>
    <property type="match status" value="1"/>
</dbReference>
<dbReference type="SUPFAM" id="SSF53448">
    <property type="entry name" value="Nucleotide-diphospho-sugar transferases"/>
    <property type="match status" value="1"/>
</dbReference>
<dbReference type="PROSITE" id="PS00379">
    <property type="entry name" value="CDP_ALCOHOL_P_TRANSF"/>
    <property type="match status" value="1"/>
</dbReference>
<gene>
    <name type="ordered locus">Rxyl_1212</name>
</gene>
<keyword id="KW-0472">Membrane</keyword>
<keyword id="KW-0511">Multifunctional enzyme</keyword>
<keyword id="KW-0548">Nucleotidyltransferase</keyword>
<keyword id="KW-1185">Reference proteome</keyword>
<keyword id="KW-0808">Transferase</keyword>
<keyword id="KW-0812">Transmembrane</keyword>
<keyword id="KW-1133">Transmembrane helix</keyword>